<evidence type="ECO:0000250" key="1">
    <source>
        <dbReference type="UniProtKB" id="Q6Q0N0"/>
    </source>
</evidence>
<evidence type="ECO:0000250" key="2">
    <source>
        <dbReference type="UniProtKB" id="Q99JH7"/>
    </source>
</evidence>
<evidence type="ECO:0000250" key="3">
    <source>
        <dbReference type="UniProtKB" id="Q9EPL2"/>
    </source>
</evidence>
<evidence type="ECO:0000255" key="4"/>
<evidence type="ECO:0000255" key="5">
    <source>
        <dbReference type="PROSITE-ProRule" id="PRU00043"/>
    </source>
</evidence>
<evidence type="ECO:0000256" key="6">
    <source>
        <dbReference type="SAM" id="MobiDB-lite"/>
    </source>
</evidence>
<evidence type="ECO:0000269" key="7">
    <source>
    </source>
</evidence>
<evidence type="ECO:0000269" key="8">
    <source>
    </source>
</evidence>
<evidence type="ECO:0000269" key="9">
    <source>
    </source>
</evidence>
<evidence type="ECO:0000269" key="10">
    <source>
    </source>
</evidence>
<evidence type="ECO:0000269" key="11">
    <source>
    </source>
</evidence>
<evidence type="ECO:0000269" key="12">
    <source>
    </source>
</evidence>
<evidence type="ECO:0000303" key="13">
    <source>
    </source>
</evidence>
<evidence type="ECO:0000303" key="14">
    <source>
    </source>
</evidence>
<evidence type="ECO:0000303" key="15">
    <source>
    </source>
</evidence>
<evidence type="ECO:0000303" key="16">
    <source>
    </source>
</evidence>
<evidence type="ECO:0000303" key="17">
    <source>
    </source>
</evidence>
<evidence type="ECO:0000305" key="18"/>
<evidence type="ECO:0000305" key="19">
    <source>
    </source>
</evidence>
<evidence type="ECO:0000312" key="20">
    <source>
        <dbReference type="HGNC" id="HGNC:17447"/>
    </source>
</evidence>
<gene>
    <name evidence="20" type="primary">CLSTN1</name>
    <name type="synonym">CS1</name>
    <name evidence="13" type="synonym">KIAA0911</name>
</gene>
<dbReference type="EMBL" id="AF438482">
    <property type="protein sequence ID" value="AAQ04552.1"/>
    <property type="molecule type" value="mRNA"/>
</dbReference>
<dbReference type="EMBL" id="AY753301">
    <property type="protein sequence ID" value="AAV30551.1"/>
    <property type="molecule type" value="mRNA"/>
</dbReference>
<dbReference type="EMBL" id="AB020718">
    <property type="protein sequence ID" value="BAA74934.2"/>
    <property type="status" value="ALT_INIT"/>
    <property type="molecule type" value="mRNA"/>
</dbReference>
<dbReference type="EMBL" id="AK289798">
    <property type="protein sequence ID" value="BAF82487.1"/>
    <property type="molecule type" value="mRNA"/>
</dbReference>
<dbReference type="EMBL" id="AL691449">
    <property type="status" value="NOT_ANNOTATED_CDS"/>
    <property type="molecule type" value="Genomic_DNA"/>
</dbReference>
<dbReference type="EMBL" id="AL357140">
    <property type="status" value="NOT_ANNOTATED_CDS"/>
    <property type="molecule type" value="Genomic_DNA"/>
</dbReference>
<dbReference type="EMBL" id="BC033902">
    <property type="protein sequence ID" value="AAH33902.1"/>
    <property type="molecule type" value="mRNA"/>
</dbReference>
<dbReference type="CCDS" id="CCDS105.1">
    <molecule id="O94985-2"/>
</dbReference>
<dbReference type="CCDS" id="CCDS30580.1">
    <molecule id="O94985-1"/>
</dbReference>
<dbReference type="RefSeq" id="NP_001009566.1">
    <molecule id="O94985-1"/>
    <property type="nucleotide sequence ID" value="NM_001009566.3"/>
</dbReference>
<dbReference type="RefSeq" id="NP_001289812.1">
    <property type="nucleotide sequence ID" value="NM_001302883.1"/>
</dbReference>
<dbReference type="RefSeq" id="NP_055759.3">
    <molecule id="O94985-2"/>
    <property type="nucleotide sequence ID" value="NM_014944.4"/>
</dbReference>
<dbReference type="BioGRID" id="116550">
    <property type="interactions" value="141"/>
</dbReference>
<dbReference type="DIP" id="DIP-31694N"/>
<dbReference type="ELM" id="O94985"/>
<dbReference type="FunCoup" id="O94985">
    <property type="interactions" value="633"/>
</dbReference>
<dbReference type="IntAct" id="O94985">
    <property type="interactions" value="111"/>
</dbReference>
<dbReference type="MINT" id="O94985"/>
<dbReference type="STRING" id="9606.ENSP00000366513"/>
<dbReference type="GlyCosmos" id="O94985">
    <property type="glycosylation" value="4 sites, 1 glycan"/>
</dbReference>
<dbReference type="GlyGen" id="O94985">
    <property type="glycosylation" value="7 sites, 3 O-linked glycans (3 sites)"/>
</dbReference>
<dbReference type="iPTMnet" id="O94985"/>
<dbReference type="PhosphoSitePlus" id="O94985"/>
<dbReference type="BioMuta" id="CLSTN1"/>
<dbReference type="jPOST" id="O94985"/>
<dbReference type="MassIVE" id="O94985"/>
<dbReference type="PaxDb" id="9606-ENSP00000366513"/>
<dbReference type="PeptideAtlas" id="O94985"/>
<dbReference type="ProteomicsDB" id="50608">
    <molecule id="O94985-1"/>
</dbReference>
<dbReference type="ProteomicsDB" id="50609">
    <molecule id="O94985-2"/>
</dbReference>
<dbReference type="Pumba" id="O94985"/>
<dbReference type="Antibodypedia" id="2632">
    <property type="antibodies" value="178 antibodies from 27 providers"/>
</dbReference>
<dbReference type="DNASU" id="22883"/>
<dbReference type="Ensembl" id="ENST00000361311.4">
    <molecule id="O94985-2"/>
    <property type="protein sequence ID" value="ENSP00000354997.4"/>
    <property type="gene ID" value="ENSG00000171603.18"/>
</dbReference>
<dbReference type="Ensembl" id="ENST00000377298.9">
    <molecule id="O94985-1"/>
    <property type="protein sequence ID" value="ENSP00000366513.4"/>
    <property type="gene ID" value="ENSG00000171603.18"/>
</dbReference>
<dbReference type="GeneID" id="22883"/>
<dbReference type="KEGG" id="hsa:22883"/>
<dbReference type="MANE-Select" id="ENST00000377298.9">
    <property type="protein sequence ID" value="ENSP00000366513.4"/>
    <property type="RefSeq nucleotide sequence ID" value="NM_001009566.3"/>
    <property type="RefSeq protein sequence ID" value="NP_001009566.1"/>
</dbReference>
<dbReference type="UCSC" id="uc001aqh.4">
    <molecule id="O94985-1"/>
    <property type="organism name" value="human"/>
</dbReference>
<dbReference type="AGR" id="HGNC:17447"/>
<dbReference type="CTD" id="22883"/>
<dbReference type="DisGeNET" id="22883"/>
<dbReference type="GeneCards" id="CLSTN1"/>
<dbReference type="HGNC" id="HGNC:17447">
    <property type="gene designation" value="CLSTN1"/>
</dbReference>
<dbReference type="HPA" id="ENSG00000171603">
    <property type="expression patterns" value="Low tissue specificity"/>
</dbReference>
<dbReference type="MIM" id="611321">
    <property type="type" value="gene"/>
</dbReference>
<dbReference type="neXtProt" id="NX_O94985"/>
<dbReference type="OpenTargets" id="ENSG00000171603"/>
<dbReference type="PharmGKB" id="PA38238"/>
<dbReference type="VEuPathDB" id="HostDB:ENSG00000171603"/>
<dbReference type="eggNOG" id="KOG1834">
    <property type="taxonomic scope" value="Eukaryota"/>
</dbReference>
<dbReference type="GeneTree" id="ENSGT00950000183086"/>
<dbReference type="HOGENOM" id="CLU_008904_0_0_1"/>
<dbReference type="InParanoid" id="O94985"/>
<dbReference type="OMA" id="CWQGSDN"/>
<dbReference type="OrthoDB" id="10012272at2759"/>
<dbReference type="PAN-GO" id="O94985">
    <property type="GO annotations" value="4 GO annotations based on evolutionary models"/>
</dbReference>
<dbReference type="PhylomeDB" id="O94985"/>
<dbReference type="TreeFam" id="TF315946"/>
<dbReference type="PathwayCommons" id="O94985"/>
<dbReference type="SignaLink" id="O94985"/>
<dbReference type="BioGRID-ORCS" id="22883">
    <property type="hits" value="16 hits in 1159 CRISPR screens"/>
</dbReference>
<dbReference type="ChiTaRS" id="CLSTN1">
    <property type="organism name" value="human"/>
</dbReference>
<dbReference type="GeneWiki" id="CLSTN1"/>
<dbReference type="GenomeRNAi" id="22883"/>
<dbReference type="Pharos" id="O94985">
    <property type="development level" value="Tbio"/>
</dbReference>
<dbReference type="PRO" id="PR:O94985"/>
<dbReference type="Proteomes" id="UP000005640">
    <property type="component" value="Chromosome 1"/>
</dbReference>
<dbReference type="RNAct" id="O94985">
    <property type="molecule type" value="protein"/>
</dbReference>
<dbReference type="Bgee" id="ENSG00000171603">
    <property type="expression patterns" value="Expressed in frontal pole and 205 other cell types or tissues"/>
</dbReference>
<dbReference type="ExpressionAtlas" id="O94985">
    <property type="expression patterns" value="baseline and differential"/>
</dbReference>
<dbReference type="GO" id="GO:0009986">
    <property type="term" value="C:cell surface"/>
    <property type="evidence" value="ECO:0000318"/>
    <property type="project" value="GO_Central"/>
</dbReference>
<dbReference type="GO" id="GO:0005789">
    <property type="term" value="C:endoplasmic reticulum membrane"/>
    <property type="evidence" value="ECO:0007669"/>
    <property type="project" value="UniProtKB-SubCell"/>
</dbReference>
<dbReference type="GO" id="GO:0005576">
    <property type="term" value="C:extracellular region"/>
    <property type="evidence" value="ECO:0007669"/>
    <property type="project" value="Ensembl"/>
</dbReference>
<dbReference type="GO" id="GO:0098978">
    <property type="term" value="C:glutamatergic synapse"/>
    <property type="evidence" value="ECO:0007669"/>
    <property type="project" value="Ensembl"/>
</dbReference>
<dbReference type="GO" id="GO:0000139">
    <property type="term" value="C:Golgi membrane"/>
    <property type="evidence" value="ECO:0007669"/>
    <property type="project" value="UniProtKB-SubCell"/>
</dbReference>
<dbReference type="GO" id="GO:0043005">
    <property type="term" value="C:neuron projection"/>
    <property type="evidence" value="ECO:0007669"/>
    <property type="project" value="UniProtKB-SubCell"/>
</dbReference>
<dbReference type="GO" id="GO:0005634">
    <property type="term" value="C:nucleus"/>
    <property type="evidence" value="ECO:0007669"/>
    <property type="project" value="UniProtKB-SubCell"/>
</dbReference>
<dbReference type="GO" id="GO:0014069">
    <property type="term" value="C:postsynaptic density"/>
    <property type="evidence" value="ECO:0007669"/>
    <property type="project" value="Ensembl"/>
</dbReference>
<dbReference type="GO" id="GO:0098845">
    <property type="term" value="C:postsynaptic endosome"/>
    <property type="evidence" value="ECO:0007669"/>
    <property type="project" value="Ensembl"/>
</dbReference>
<dbReference type="GO" id="GO:0045211">
    <property type="term" value="C:postsynaptic membrane"/>
    <property type="evidence" value="ECO:0000318"/>
    <property type="project" value="GO_Central"/>
</dbReference>
<dbReference type="GO" id="GO:0001540">
    <property type="term" value="F:amyloid-beta binding"/>
    <property type="evidence" value="ECO:0000314"/>
    <property type="project" value="UniProtKB"/>
</dbReference>
<dbReference type="GO" id="GO:0005509">
    <property type="term" value="F:calcium ion binding"/>
    <property type="evidence" value="ECO:0007669"/>
    <property type="project" value="InterPro"/>
</dbReference>
<dbReference type="GO" id="GO:0019894">
    <property type="term" value="F:kinesin binding"/>
    <property type="evidence" value="ECO:0000353"/>
    <property type="project" value="UniProtKB"/>
</dbReference>
<dbReference type="GO" id="GO:0042988">
    <property type="term" value="F:X11-like protein binding"/>
    <property type="evidence" value="ECO:0000353"/>
    <property type="project" value="UniProtKB"/>
</dbReference>
<dbReference type="GO" id="GO:0007155">
    <property type="term" value="P:cell adhesion"/>
    <property type="evidence" value="ECO:0000304"/>
    <property type="project" value="UniProtKB"/>
</dbReference>
<dbReference type="GO" id="GO:0007156">
    <property type="term" value="P:homophilic cell adhesion via plasma membrane adhesion molecules"/>
    <property type="evidence" value="ECO:0007669"/>
    <property type="project" value="InterPro"/>
</dbReference>
<dbReference type="GO" id="GO:0098969">
    <property type="term" value="P:neurotransmitter receptor transport to postsynaptic membrane"/>
    <property type="evidence" value="ECO:0007669"/>
    <property type="project" value="Ensembl"/>
</dbReference>
<dbReference type="GO" id="GO:0051965">
    <property type="term" value="P:positive regulation of synapse assembly"/>
    <property type="evidence" value="ECO:0000318"/>
    <property type="project" value="GO_Central"/>
</dbReference>
<dbReference type="GO" id="GO:0050806">
    <property type="term" value="P:positive regulation of synaptic transmission"/>
    <property type="evidence" value="ECO:0000318"/>
    <property type="project" value="GO_Central"/>
</dbReference>
<dbReference type="GO" id="GO:0001558">
    <property type="term" value="P:regulation of cell growth"/>
    <property type="evidence" value="ECO:0007669"/>
    <property type="project" value="Ensembl"/>
</dbReference>
<dbReference type="GO" id="GO:0090128">
    <property type="term" value="P:regulation of synapse maturation"/>
    <property type="evidence" value="ECO:0007669"/>
    <property type="project" value="Ensembl"/>
</dbReference>
<dbReference type="GO" id="GO:0099003">
    <property type="term" value="P:vesicle-mediated transport in synapse"/>
    <property type="evidence" value="ECO:0007669"/>
    <property type="project" value="Ensembl"/>
</dbReference>
<dbReference type="CDD" id="cd11304">
    <property type="entry name" value="Cadherin_repeat"/>
    <property type="match status" value="2"/>
</dbReference>
<dbReference type="FunFam" id="2.60.120.200:FF:000036">
    <property type="entry name" value="Calsyntenin 1"/>
    <property type="match status" value="1"/>
</dbReference>
<dbReference type="FunFam" id="2.60.40.60:FF:000025">
    <property type="entry name" value="Calsyntenin 1"/>
    <property type="match status" value="1"/>
</dbReference>
<dbReference type="FunFam" id="2.60.40.60:FF:000062">
    <property type="entry name" value="Calsyntenin 3"/>
    <property type="match status" value="1"/>
</dbReference>
<dbReference type="Gene3D" id="2.60.120.200">
    <property type="match status" value="1"/>
</dbReference>
<dbReference type="Gene3D" id="2.60.40.60">
    <property type="entry name" value="Cadherins"/>
    <property type="match status" value="2"/>
</dbReference>
<dbReference type="InterPro" id="IPR002126">
    <property type="entry name" value="Cadherin-like_dom"/>
</dbReference>
<dbReference type="InterPro" id="IPR015919">
    <property type="entry name" value="Cadherin-like_sf"/>
</dbReference>
<dbReference type="InterPro" id="IPR045588">
    <property type="entry name" value="CLSTN_C"/>
</dbReference>
<dbReference type="InterPro" id="IPR013320">
    <property type="entry name" value="ConA-like_dom_sf"/>
</dbReference>
<dbReference type="PANTHER" id="PTHR14139">
    <property type="entry name" value="CALSYNTENIN"/>
    <property type="match status" value="1"/>
</dbReference>
<dbReference type="PANTHER" id="PTHR14139:SF4">
    <property type="entry name" value="CALSYNTENIN-1"/>
    <property type="match status" value="1"/>
</dbReference>
<dbReference type="Pfam" id="PF00028">
    <property type="entry name" value="Cadherin"/>
    <property type="match status" value="1"/>
</dbReference>
<dbReference type="Pfam" id="PF19699">
    <property type="entry name" value="CLSTN_C"/>
    <property type="match status" value="1"/>
</dbReference>
<dbReference type="Pfam" id="PF13385">
    <property type="entry name" value="Laminin_G_3"/>
    <property type="match status" value="1"/>
</dbReference>
<dbReference type="PRINTS" id="PR00205">
    <property type="entry name" value="CADHERIN"/>
</dbReference>
<dbReference type="SMART" id="SM00112">
    <property type="entry name" value="CA"/>
    <property type="match status" value="2"/>
</dbReference>
<dbReference type="SUPFAM" id="SSF49313">
    <property type="entry name" value="Cadherin-like"/>
    <property type="match status" value="2"/>
</dbReference>
<dbReference type="SUPFAM" id="SSF49899">
    <property type="entry name" value="Concanavalin A-like lectins/glucanases"/>
    <property type="match status" value="1"/>
</dbReference>
<dbReference type="PROSITE" id="PS50268">
    <property type="entry name" value="CADHERIN_2"/>
    <property type="match status" value="2"/>
</dbReference>
<proteinExistence type="evidence at protein level"/>
<sequence length="981" mass="109793">MLRRPAPALAPAARLLLAGLLCGGGVWAARVNKHKPWLEPTYHGIVTENDNTVLLDPPLIALDKDAPLRFAESFEVTVTKEGEICGFKIHGQNVPFDAVVVDKSTGEGVIRSKEKLDCELQKDYSFTIQAYDCGKGPDGTNVKKSHKATVHIQVNDVNEYAPVFKEKSYKATVIEGKQYDSILRVEAVDADCSPQFSQICSYEIITPDVPFTVDKDGYIKNTEKLNYGKEHQYKLTVTAYDCGKKRATEDVLVKISIKPTCTPGWQGWNNRIEYEPGTGALAVFPNIHLETCDEPVASVQATVELETSHIGKGCDRDTYSEKSLHRLCGAAAGTAELLPSPSGSLNWTMGLPTDNGHDSDQVFEFNGTQAVRIPDGVVSVSPKEPFTISVWMRHGPFGRKKETILCSSDKTDMNRHHYSLYVHGCRLIFLFRQDPSEEKKYRPAEFHWKLNQVCDEEWHHYVLNVEFPSVTLYVDGTSHEPFSVTEDYPLHPSKIETQLVVGACWQEFSGVENDNETEPVTVASAGGDLHMTQFFRGNLAGLTLRSGKLADKKVIDCLYTCKEGLDLQVLEDSGRGVQIQAHPSQLVLTLEGEDLGELDKAMQHISYLNSRQFPTPGIRRLKITSTIKCFNEATCISVPPVDGYVMVLQPEEPKISLSGVHHFARAASEFESSEGVFLFPELRIISTITREVEPEGDGAEDPTVQESLVSEEIVHDLDTCEVTVEGEELNHEQESLEVDMARLQQKGIEVSSSELGMTFTGVDTMASYEEVLHLLRYRNWHARSLLDRKFKLICSELNGRYISNEFKVEVNVIHTANPMEHANHMAAQPQFVHPEHRSFVDLSGHNLANPHPFAVVPSTATVVIVVCVSFLVFMIILGVFRIRAAHRRTMRDQDTGKENEMDWDDSALTITVNPMETYEDQHSSEEEEEEEEEEESEDGEEEDDITSAESESSEEEEGEQGDPQNATRQQQLEWDDSTLSY</sequence>
<organism>
    <name type="scientific">Homo sapiens</name>
    <name type="common">Human</name>
    <dbReference type="NCBI Taxonomy" id="9606"/>
    <lineage>
        <taxon>Eukaryota</taxon>
        <taxon>Metazoa</taxon>
        <taxon>Chordata</taxon>
        <taxon>Craniata</taxon>
        <taxon>Vertebrata</taxon>
        <taxon>Euteleostomi</taxon>
        <taxon>Mammalia</taxon>
        <taxon>Eutheria</taxon>
        <taxon>Euarchontoglires</taxon>
        <taxon>Primates</taxon>
        <taxon>Haplorrhini</taxon>
        <taxon>Catarrhini</taxon>
        <taxon>Hominidae</taxon>
        <taxon>Homo</taxon>
    </lineage>
</organism>
<protein>
    <recommendedName>
        <fullName evidence="14">Calsyntenin-1</fullName>
    </recommendedName>
    <alternativeName>
        <fullName evidence="15">Alcadein-alpha</fullName>
        <shortName evidence="15">Alc-alpha</shortName>
    </alternativeName>
    <alternativeName>
        <fullName>Alzheimer-related cadherin-like protein</fullName>
    </alternativeName>
    <alternativeName>
        <fullName>Non-classical cadherin XB31alpha</fullName>
    </alternativeName>
    <component>
        <recommendedName>
            <fullName evidence="19">Soluble Alc-alpha</fullName>
            <shortName evidence="19">SAlc-alpha</shortName>
        </recommendedName>
    </component>
    <component>
        <recommendedName>
            <fullName evidence="19">CTF1-alpha</fullName>
        </recommendedName>
        <alternativeName>
            <fullName evidence="19">C-terminal fragment 1-alpha</fullName>
        </alternativeName>
    </component>
</protein>
<comment type="function">
    <text evidence="2 3 8 12">Postsynaptic adhesion molecule that binds to presynaptic neurexins to mediate both excitatory and inhibitory synapse formation (By similarity). Promotes synapse development by acting as a cell adhesion molecule at the postsynaptic membrane, which associates with neurexin-alpha at the presynaptic membrane (By similarity). Also functions as a cargo in axonal anterograde transport by acting as a molecular adapter that promotes KLC1 association with vesicles (PubMed:21385839). Complex formation with APBA2 and APP, stabilizes APP metabolism and enhances APBA2-mediated suppression of beta-APP40 secretion, due to the retardation of intracellular APP maturation (PubMed:12972431).</text>
</comment>
<comment type="function">
    <molecule>Soluble Alc-alpha</molecule>
    <text evidence="19">As intracellular fragment AlcICD, suppresses APBB1-dependent transactivation stimulated by APP C-terminal intracellular fragment (AICD), most probably by competing with AICD for APBB1-binding (PubMed:15037614).</text>
</comment>
<comment type="function">
    <molecule>CTF1-alpha</molecule>
    <text evidence="19">In complex with APBA2 and C99, a C-terminal APP fragment, abolishes C99 interaction with PSEN1 and thus APP C99 cleavage by gamma-secretase, most probably through stabilization of the direct interaction between APBA2 and APP (PubMed:15037614).</text>
</comment>
<comment type="subunit">
    <text evidence="3 8 11 12">Directly interacts with APBA2 (PubMed:12972431). Forms a tripartite complex with APBA2 and APP (By similarity). Interacts with KLC1 (PubMed:17332754, PubMed:21385839).</text>
</comment>
<comment type="subunit">
    <molecule>Soluble Alc-alpha</molecule>
    <text evidence="9">Interacts with APBB1; this interaction stabilizes AlcICD metabolism.</text>
</comment>
<comment type="subunit">
    <molecule>CTF1-alpha</molecule>
    <text evidence="9">Interacts with PSEN1.</text>
</comment>
<comment type="interaction">
    <interactant intactId="EBI-522075">
        <id>O94985</id>
    </interactant>
    <interactant intactId="EBI-81711">
        <id>Q99767</id>
        <label>APBA2</label>
    </interactant>
    <organismsDiffer>false</organismsDiffer>
    <experiments>2</experiments>
</comment>
<comment type="interaction">
    <interactant intactId="EBI-522075">
        <id>O94985</id>
    </interactant>
    <interactant intactId="EBI-6271950">
        <id>Q8CD76</id>
        <label>Klc1</label>
    </interactant>
    <organismsDiffer>true</organismsDiffer>
    <experiments>7</experiments>
</comment>
<comment type="interaction">
    <interactant intactId="EBI-16041593">
        <id>O94985-2</id>
    </interactant>
    <interactant intactId="EBI-77613">
        <id>P05067</id>
        <label>APP</label>
    </interactant>
    <organismsDiffer>false</organismsDiffer>
    <experiments>3</experiments>
</comment>
<comment type="interaction">
    <interactant intactId="EBI-16041593">
        <id>O94985-2</id>
    </interactant>
    <interactant intactId="EBI-25873837">
        <id>Q9UK58-5</id>
        <label>CCNL1</label>
    </interactant>
    <organismsDiffer>false</organismsDiffer>
    <experiments>3</experiments>
</comment>
<comment type="interaction">
    <interactant intactId="EBI-16041593">
        <id>O94985-2</id>
    </interactant>
    <interactant intactId="EBI-4401010">
        <id>P09496-2</id>
        <label>CLTA</label>
    </interactant>
    <organismsDiffer>false</organismsDiffer>
    <experiments>3</experiments>
</comment>
<comment type="interaction">
    <interactant intactId="EBI-16041593">
        <id>O94985-2</id>
    </interactant>
    <interactant intactId="EBI-743960">
        <id>Q8N5Z5</id>
        <label>KCTD17</label>
    </interactant>
    <organismsDiffer>false</organismsDiffer>
    <experiments>3</experiments>
</comment>
<comment type="interaction">
    <interactant intactId="EBI-16041593">
        <id>O94985-2</id>
    </interactant>
    <interactant intactId="EBI-10238012">
        <id>Q16609</id>
        <label>LPAL2</label>
    </interactant>
    <organismsDiffer>false</organismsDiffer>
    <experiments>3</experiments>
</comment>
<comment type="interaction">
    <interactant intactId="EBI-16041593">
        <id>O94985-2</id>
    </interactant>
    <interactant intactId="EBI-945925">
        <id>Q9Y6R0</id>
        <label>NUMBL</label>
    </interactant>
    <organismsDiffer>false</organismsDiffer>
    <experiments>3</experiments>
</comment>
<comment type="interaction">
    <interactant intactId="EBI-16041593">
        <id>O94985-2</id>
    </interactant>
    <interactant intactId="EBI-1048104">
        <id>O60927</id>
        <label>PPP1R11</label>
    </interactant>
    <organismsDiffer>false</organismsDiffer>
    <experiments>3</experiments>
</comment>
<comment type="interaction">
    <interactant intactId="EBI-16041593">
        <id>O94985-2</id>
    </interactant>
    <interactant intactId="EBI-620823">
        <id>Q09028</id>
        <label>RBBP4</label>
    </interactant>
    <organismsDiffer>false</organismsDiffer>
    <experiments>3</experiments>
</comment>
<comment type="interaction">
    <interactant intactId="EBI-16041593">
        <id>O94985-2</id>
    </interactant>
    <interactant intactId="EBI-714023">
        <id>Q8N5U6</id>
        <label>RNF10</label>
    </interactant>
    <organismsDiffer>false</organismsDiffer>
    <experiments>3</experiments>
</comment>
<comment type="interaction">
    <interactant intactId="EBI-16041593">
        <id>O94985-2</id>
    </interactant>
    <interactant intactId="EBI-632715">
        <id>Q13573</id>
        <label>SNW1</label>
    </interactant>
    <organismsDiffer>false</organismsDiffer>
    <experiments>3</experiments>
</comment>
<comment type="interaction">
    <interactant intactId="EBI-16041593">
        <id>O94985-2</id>
    </interactant>
    <interactant intactId="EBI-6272135">
        <id>Q91YS4</id>
        <label>Klc2</label>
    </interactant>
    <organismsDiffer>true</organismsDiffer>
    <experiments>2</experiments>
</comment>
<comment type="subcellular location">
    <subcellularLocation>
        <location evidence="3">Postsynaptic cell membrane</location>
        <topology evidence="4">Single-pass type I membrane protein</topology>
    </subcellularLocation>
    <subcellularLocation>
        <location evidence="11">Endoplasmic reticulum membrane</location>
        <topology evidence="4">Single-pass type I membrane protein</topology>
    </subcellularLocation>
    <subcellularLocation>
        <location evidence="11 12">Golgi apparatus membrane</location>
        <topology evidence="4">Single-pass type I membrane protein</topology>
    </subcellularLocation>
    <subcellularLocation>
        <location evidence="11">Cell projection</location>
        <location evidence="11">Neuron projection</location>
    </subcellularLocation>
    <text evidence="3">Localized in the postsynaptic membrane of both excitatory and inhibitory synapses.</text>
</comment>
<comment type="subcellular location">
    <molecule>Soluble Alc-alpha</molecule>
    <subcellularLocation>
        <location evidence="11">Nucleus</location>
    </subcellularLocation>
    <text evidence="11">The AlcICD fragment is translocated to the nucleus upon interaction with APBB1.</text>
</comment>
<comment type="alternative products">
    <event type="alternative splicing"/>
    <isoform>
        <id>O94985-1</id>
        <name>1</name>
        <name>Alcalpha2</name>
        <sequence type="displayed"/>
    </isoform>
    <isoform>
        <id>O94985-2</id>
        <name>2</name>
        <name>Alcalpha1</name>
        <sequence type="described" ref="VSP_032035"/>
    </isoform>
</comment>
<comment type="tissue specificity">
    <text evidence="7 8">Expressed in the brain and, a lower level, in the heart, skeletal muscle, kidney and placenta. Accumulates in dystrophic neurites around the amyloid core of Alzheimer disease senile plaques (at protein level).</text>
</comment>
<comment type="domain">
    <text evidence="3">The cytoplasmic domain binds synaptic Ca(2+).</text>
</comment>
<comment type="PTM">
    <text evidence="9">Proteolytically processed under normal cellular conditions (PubMed:15037614). A primary zeta-cleavage generates a large extracellular (soluble) N-terminal domain (sAlc) and a short C-terminal transmembrane fragment (CTF1) (PubMed:15037614). A secondary cleavage catalyzed by presenilin gamma-secretase within the transmembrane domain releases the beta-Alc-alpha chain in the extracellular milieu and produces an intracellular fragment (AlcICD) (PubMed:15037614). This processing is strongly suppressed in the tripartite complex formed with APBA2 and APP, which seems to prevent the association with PSEN1 (PubMed:15037614).</text>
</comment>
<comment type="similarity">
    <text evidence="18">Belongs to the calsyntenin family.</text>
</comment>
<comment type="sequence caution" evidence="18">
    <conflict type="erroneous initiation">
        <sequence resource="EMBL-CDS" id="BAA74934"/>
    </conflict>
    <text>Extended N-terminus.</text>
</comment>
<name>CSTN1_HUMAN</name>
<accession>O94985</accession>
<accession>A8K183</accession>
<accession>Q5SR52</accession>
<accession>Q5UE58</accession>
<accession>Q71MN0</accession>
<accession>Q8N4K9</accession>
<keyword id="KW-0025">Alternative splicing</keyword>
<keyword id="KW-0106">Calcium</keyword>
<keyword id="KW-0130">Cell adhesion</keyword>
<keyword id="KW-1003">Cell membrane</keyword>
<keyword id="KW-0966">Cell projection</keyword>
<keyword id="KW-0903">Direct protein sequencing</keyword>
<keyword id="KW-0256">Endoplasmic reticulum</keyword>
<keyword id="KW-0325">Glycoprotein</keyword>
<keyword id="KW-0333">Golgi apparatus</keyword>
<keyword id="KW-0472">Membrane</keyword>
<keyword id="KW-0539">Nucleus</keyword>
<keyword id="KW-0628">Postsynaptic cell membrane</keyword>
<keyword id="KW-1267">Proteomics identification</keyword>
<keyword id="KW-1185">Reference proteome</keyword>
<keyword id="KW-0677">Repeat</keyword>
<keyword id="KW-0732">Signal</keyword>
<keyword id="KW-0770">Synapse</keyword>
<keyword id="KW-0812">Transmembrane</keyword>
<keyword id="KW-1133">Transmembrane helix</keyword>
<reference key="1">
    <citation type="journal article" date="2003" name="J. Biol. Chem.">
        <title>Novel cadherin-related membrane proteins, Alcadeins, enhance the X11-like protein-mediated stabilization of amyloid beta-protein precursor metabolism.</title>
        <authorList>
            <person name="Araki Y."/>
            <person name="Tomita S."/>
            <person name="Yamaguchi H."/>
            <person name="Miyagi N."/>
            <person name="Sumioka A."/>
            <person name="Kirino Y."/>
            <person name="Suzuki T."/>
        </authorList>
    </citation>
    <scope>NUCLEOTIDE SEQUENCE [MRNA] (ISOFORM 2)</scope>
    <scope>FUNCTION</scope>
    <scope>TISSUE SPECIFICITY</scope>
    <scope>INTERACTION WITH APBA2</scope>
    <scope>MUTAGENESIS OF 913-ASN-PRO-914 AND TYR-918</scope>
    <source>
        <tissue>Brain</tissue>
    </source>
</reference>
<reference key="2">
    <citation type="journal article" date="1998" name="DNA Res.">
        <title>Prediction of the coding sequences of unidentified human genes. XII. The complete sequences of 100 new cDNA clones from brain which code for large proteins in vitro.</title>
        <authorList>
            <person name="Nagase T."/>
            <person name="Ishikawa K."/>
            <person name="Suyama M."/>
            <person name="Kikuno R."/>
            <person name="Hirosawa M."/>
            <person name="Miyajima N."/>
            <person name="Tanaka A."/>
            <person name="Kotani H."/>
            <person name="Nomura N."/>
            <person name="Ohara O."/>
        </authorList>
    </citation>
    <scope>NUCLEOTIDE SEQUENCE [LARGE SCALE MRNA]</scope>
    <source>
        <tissue>Brain</tissue>
    </source>
</reference>
<reference key="3">
    <citation type="journal article" date="2004" name="Nat. Genet.">
        <title>Complete sequencing and characterization of 21,243 full-length human cDNAs.</title>
        <authorList>
            <person name="Ota T."/>
            <person name="Suzuki Y."/>
            <person name="Nishikawa T."/>
            <person name="Otsuki T."/>
            <person name="Sugiyama T."/>
            <person name="Irie R."/>
            <person name="Wakamatsu A."/>
            <person name="Hayashi K."/>
            <person name="Sato H."/>
            <person name="Nagai K."/>
            <person name="Kimura K."/>
            <person name="Makita H."/>
            <person name="Sekine M."/>
            <person name="Obayashi M."/>
            <person name="Nishi T."/>
            <person name="Shibahara T."/>
            <person name="Tanaka T."/>
            <person name="Ishii S."/>
            <person name="Yamamoto J."/>
            <person name="Saito K."/>
            <person name="Kawai Y."/>
            <person name="Isono Y."/>
            <person name="Nakamura Y."/>
            <person name="Nagahari K."/>
            <person name="Murakami K."/>
            <person name="Yasuda T."/>
            <person name="Iwayanagi T."/>
            <person name="Wagatsuma M."/>
            <person name="Shiratori A."/>
            <person name="Sudo H."/>
            <person name="Hosoiri T."/>
            <person name="Kaku Y."/>
            <person name="Kodaira H."/>
            <person name="Kondo H."/>
            <person name="Sugawara M."/>
            <person name="Takahashi M."/>
            <person name="Kanda K."/>
            <person name="Yokoi T."/>
            <person name="Furuya T."/>
            <person name="Kikkawa E."/>
            <person name="Omura Y."/>
            <person name="Abe K."/>
            <person name="Kamihara K."/>
            <person name="Katsuta N."/>
            <person name="Sato K."/>
            <person name="Tanikawa M."/>
            <person name="Yamazaki M."/>
            <person name="Ninomiya K."/>
            <person name="Ishibashi T."/>
            <person name="Yamashita H."/>
            <person name="Murakawa K."/>
            <person name="Fujimori K."/>
            <person name="Tanai H."/>
            <person name="Kimata M."/>
            <person name="Watanabe M."/>
            <person name="Hiraoka S."/>
            <person name="Chiba Y."/>
            <person name="Ishida S."/>
            <person name="Ono Y."/>
            <person name="Takiguchi S."/>
            <person name="Watanabe S."/>
            <person name="Yosida M."/>
            <person name="Hotuta T."/>
            <person name="Kusano J."/>
            <person name="Kanehori K."/>
            <person name="Takahashi-Fujii A."/>
            <person name="Hara H."/>
            <person name="Tanase T.-O."/>
            <person name="Nomura Y."/>
            <person name="Togiya S."/>
            <person name="Komai F."/>
            <person name="Hara R."/>
            <person name="Takeuchi K."/>
            <person name="Arita M."/>
            <person name="Imose N."/>
            <person name="Musashino K."/>
            <person name="Yuuki H."/>
            <person name="Oshima A."/>
            <person name="Sasaki N."/>
            <person name="Aotsuka S."/>
            <person name="Yoshikawa Y."/>
            <person name="Matsunawa H."/>
            <person name="Ichihara T."/>
            <person name="Shiohata N."/>
            <person name="Sano S."/>
            <person name="Moriya S."/>
            <person name="Momiyama H."/>
            <person name="Satoh N."/>
            <person name="Takami S."/>
            <person name="Terashima Y."/>
            <person name="Suzuki O."/>
            <person name="Nakagawa S."/>
            <person name="Senoh A."/>
            <person name="Mizoguchi H."/>
            <person name="Goto Y."/>
            <person name="Shimizu F."/>
            <person name="Wakebe H."/>
            <person name="Hishigaki H."/>
            <person name="Watanabe T."/>
            <person name="Sugiyama A."/>
            <person name="Takemoto M."/>
            <person name="Kawakami B."/>
            <person name="Yamazaki M."/>
            <person name="Watanabe K."/>
            <person name="Kumagai A."/>
            <person name="Itakura S."/>
            <person name="Fukuzumi Y."/>
            <person name="Fujimori Y."/>
            <person name="Komiyama M."/>
            <person name="Tashiro H."/>
            <person name="Tanigami A."/>
            <person name="Fujiwara T."/>
            <person name="Ono T."/>
            <person name="Yamada K."/>
            <person name="Fujii Y."/>
            <person name="Ozaki K."/>
            <person name="Hirao M."/>
            <person name="Ohmori Y."/>
            <person name="Kawabata A."/>
            <person name="Hikiji T."/>
            <person name="Kobatake N."/>
            <person name="Inagaki H."/>
            <person name="Ikema Y."/>
            <person name="Okamoto S."/>
            <person name="Okitani R."/>
            <person name="Kawakami T."/>
            <person name="Noguchi S."/>
            <person name="Itoh T."/>
            <person name="Shigeta K."/>
            <person name="Senba T."/>
            <person name="Matsumura K."/>
            <person name="Nakajima Y."/>
            <person name="Mizuno T."/>
            <person name="Morinaga M."/>
            <person name="Sasaki M."/>
            <person name="Togashi T."/>
            <person name="Oyama M."/>
            <person name="Hata H."/>
            <person name="Watanabe M."/>
            <person name="Komatsu T."/>
            <person name="Mizushima-Sugano J."/>
            <person name="Satoh T."/>
            <person name="Shirai Y."/>
            <person name="Takahashi Y."/>
            <person name="Nakagawa K."/>
            <person name="Okumura K."/>
            <person name="Nagase T."/>
            <person name="Nomura N."/>
            <person name="Kikuchi H."/>
            <person name="Masuho Y."/>
            <person name="Yamashita R."/>
            <person name="Nakai K."/>
            <person name="Yada T."/>
            <person name="Nakamura Y."/>
            <person name="Ohara O."/>
            <person name="Isogai T."/>
            <person name="Sugano S."/>
        </authorList>
    </citation>
    <scope>NUCLEOTIDE SEQUENCE [LARGE SCALE MRNA] (ISOFORM 2)</scope>
    <source>
        <tissue>Brain</tissue>
    </source>
</reference>
<reference key="4">
    <citation type="journal article" date="2006" name="Nature">
        <title>The DNA sequence and biological annotation of human chromosome 1.</title>
        <authorList>
            <person name="Gregory S.G."/>
            <person name="Barlow K.F."/>
            <person name="McLay K.E."/>
            <person name="Kaul R."/>
            <person name="Swarbreck D."/>
            <person name="Dunham A."/>
            <person name="Scott C.E."/>
            <person name="Howe K.L."/>
            <person name="Woodfine K."/>
            <person name="Spencer C.C.A."/>
            <person name="Jones M.C."/>
            <person name="Gillson C."/>
            <person name="Searle S."/>
            <person name="Zhou Y."/>
            <person name="Kokocinski F."/>
            <person name="McDonald L."/>
            <person name="Evans R."/>
            <person name="Phillips K."/>
            <person name="Atkinson A."/>
            <person name="Cooper R."/>
            <person name="Jones C."/>
            <person name="Hall R.E."/>
            <person name="Andrews T.D."/>
            <person name="Lloyd C."/>
            <person name="Ainscough R."/>
            <person name="Almeida J.P."/>
            <person name="Ambrose K.D."/>
            <person name="Anderson F."/>
            <person name="Andrew R.W."/>
            <person name="Ashwell R.I.S."/>
            <person name="Aubin K."/>
            <person name="Babbage A.K."/>
            <person name="Bagguley C.L."/>
            <person name="Bailey J."/>
            <person name="Beasley H."/>
            <person name="Bethel G."/>
            <person name="Bird C.P."/>
            <person name="Bray-Allen S."/>
            <person name="Brown J.Y."/>
            <person name="Brown A.J."/>
            <person name="Buckley D."/>
            <person name="Burton J."/>
            <person name="Bye J."/>
            <person name="Carder C."/>
            <person name="Chapman J.C."/>
            <person name="Clark S.Y."/>
            <person name="Clarke G."/>
            <person name="Clee C."/>
            <person name="Cobley V."/>
            <person name="Collier R.E."/>
            <person name="Corby N."/>
            <person name="Coville G.J."/>
            <person name="Davies J."/>
            <person name="Deadman R."/>
            <person name="Dunn M."/>
            <person name="Earthrowl M."/>
            <person name="Ellington A.G."/>
            <person name="Errington H."/>
            <person name="Frankish A."/>
            <person name="Frankland J."/>
            <person name="French L."/>
            <person name="Garner P."/>
            <person name="Garnett J."/>
            <person name="Gay L."/>
            <person name="Ghori M.R.J."/>
            <person name="Gibson R."/>
            <person name="Gilby L.M."/>
            <person name="Gillett W."/>
            <person name="Glithero R.J."/>
            <person name="Grafham D.V."/>
            <person name="Griffiths C."/>
            <person name="Griffiths-Jones S."/>
            <person name="Grocock R."/>
            <person name="Hammond S."/>
            <person name="Harrison E.S.I."/>
            <person name="Hart E."/>
            <person name="Haugen E."/>
            <person name="Heath P.D."/>
            <person name="Holmes S."/>
            <person name="Holt K."/>
            <person name="Howden P.J."/>
            <person name="Hunt A.R."/>
            <person name="Hunt S.E."/>
            <person name="Hunter G."/>
            <person name="Isherwood J."/>
            <person name="James R."/>
            <person name="Johnson C."/>
            <person name="Johnson D."/>
            <person name="Joy A."/>
            <person name="Kay M."/>
            <person name="Kershaw J.K."/>
            <person name="Kibukawa M."/>
            <person name="Kimberley A.M."/>
            <person name="King A."/>
            <person name="Knights A.J."/>
            <person name="Lad H."/>
            <person name="Laird G."/>
            <person name="Lawlor S."/>
            <person name="Leongamornlert D.A."/>
            <person name="Lloyd D.M."/>
            <person name="Loveland J."/>
            <person name="Lovell J."/>
            <person name="Lush M.J."/>
            <person name="Lyne R."/>
            <person name="Martin S."/>
            <person name="Mashreghi-Mohammadi M."/>
            <person name="Matthews L."/>
            <person name="Matthews N.S.W."/>
            <person name="McLaren S."/>
            <person name="Milne S."/>
            <person name="Mistry S."/>
            <person name="Moore M.J.F."/>
            <person name="Nickerson T."/>
            <person name="O'Dell C.N."/>
            <person name="Oliver K."/>
            <person name="Palmeiri A."/>
            <person name="Palmer S.A."/>
            <person name="Parker A."/>
            <person name="Patel D."/>
            <person name="Pearce A.V."/>
            <person name="Peck A.I."/>
            <person name="Pelan S."/>
            <person name="Phelps K."/>
            <person name="Phillimore B.J."/>
            <person name="Plumb R."/>
            <person name="Rajan J."/>
            <person name="Raymond C."/>
            <person name="Rouse G."/>
            <person name="Saenphimmachak C."/>
            <person name="Sehra H.K."/>
            <person name="Sheridan E."/>
            <person name="Shownkeen R."/>
            <person name="Sims S."/>
            <person name="Skuce C.D."/>
            <person name="Smith M."/>
            <person name="Steward C."/>
            <person name="Subramanian S."/>
            <person name="Sycamore N."/>
            <person name="Tracey A."/>
            <person name="Tromans A."/>
            <person name="Van Helmond Z."/>
            <person name="Wall M."/>
            <person name="Wallis J.M."/>
            <person name="White S."/>
            <person name="Whitehead S.L."/>
            <person name="Wilkinson J.E."/>
            <person name="Willey D.L."/>
            <person name="Williams H."/>
            <person name="Wilming L."/>
            <person name="Wray P.W."/>
            <person name="Wu Z."/>
            <person name="Coulson A."/>
            <person name="Vaudin M."/>
            <person name="Sulston J.E."/>
            <person name="Durbin R.M."/>
            <person name="Hubbard T."/>
            <person name="Wooster R."/>
            <person name="Dunham I."/>
            <person name="Carter N.P."/>
            <person name="McVean G."/>
            <person name="Ross M.T."/>
            <person name="Harrow J."/>
            <person name="Olson M.V."/>
            <person name="Beck S."/>
            <person name="Rogers J."/>
            <person name="Bentley D.R."/>
        </authorList>
    </citation>
    <scope>NUCLEOTIDE SEQUENCE [LARGE SCALE GENOMIC DNA]</scope>
</reference>
<reference key="5">
    <citation type="journal article" date="2004" name="Genome Res.">
        <title>The status, quality, and expansion of the NIH full-length cDNA project: the Mammalian Gene Collection (MGC).</title>
        <authorList>
            <consortium name="The MGC Project Team"/>
        </authorList>
    </citation>
    <scope>NUCLEOTIDE SEQUENCE [LARGE SCALE MRNA] (ISOFORM 2)</scope>
    <scope>VARIANTS ALA-474; CYS-524; ARG-583; HIS-857 AND SER-870</scope>
    <source>
        <tissue>Hippocampus</tissue>
    </source>
</reference>
<reference key="6">
    <citation type="journal article" date="2004" name="J. Biol. Chem.">
        <title>Coordinated metabolism of Alcadein and amyloid beta-protein precursor regulates FE65-dependent gene transactivation.</title>
        <authorList>
            <person name="Araki Y."/>
            <person name="Miyagi N."/>
            <person name="Kato N."/>
            <person name="Yoshida T."/>
            <person name="Wada S."/>
            <person name="Nishimura M."/>
            <person name="Komano H."/>
            <person name="Yamamoto T."/>
            <person name="De Strooper B."/>
            <person name="Yamamoto K."/>
            <person name="Suzuki T."/>
        </authorList>
    </citation>
    <scope>PROTEIN SEQUENCE OF 29-33 AND 826-833</scope>
    <scope>FUNCTION (CTF1-ALPHA AND SOLUBLE ALC-ALPHA)</scope>
    <scope>INTERACTION WITH PSEN1 (CTF1-ALPHA)</scope>
    <scope>PROTEOLYTIC CLEAVAGE</scope>
</reference>
<reference key="7">
    <citation type="journal article" date="2002" name="Mol. Cell. Neurosci.">
        <title>The calsyntenins - a family of postsynaptic membrane proteins with distinct neuronal expression patterns.</title>
        <authorList>
            <person name="Hintsch G."/>
            <person name="Zurlinden A."/>
            <person name="Meskenaite V."/>
            <person name="Steuble M."/>
            <person name="Fink-Widmer K."/>
            <person name="Kinter J."/>
            <person name="Sonderegger P."/>
        </authorList>
    </citation>
    <scope>TISSUE SPECIFICITY</scope>
</reference>
<reference key="8">
    <citation type="journal article" date="2007" name="EMBO J.">
        <title>The novel cargo Alcadein induces vesicle association of kinesin-1 motor components and activates axonal transport.</title>
        <authorList>
            <person name="Araki Y."/>
            <person name="Kawano T."/>
            <person name="Taru H."/>
            <person name="Saito Y."/>
            <person name="Wada S."/>
            <person name="Miyamoto K."/>
            <person name="Kobayashi H."/>
            <person name="Ishikawa H.O."/>
            <person name="Ohsugi Y."/>
            <person name="Yamamoto T."/>
            <person name="Matsuno K."/>
            <person name="Kinjo M."/>
            <person name="Suzuki T."/>
        </authorList>
    </citation>
    <scope>INTERACTION WITH KLC1</scope>
    <scope>SUBCELLULAR LOCATION</scope>
    <scope>GLYCOSYLATION</scope>
</reference>
<reference key="9">
    <citation type="journal article" date="2011" name="J. Cell Sci.">
        <title>Phosphorylation of kinesin light chain 1 at serine 460 modulates binding and trafficking of calsyntenin-1.</title>
        <authorList>
            <person name="Vagnoni A."/>
            <person name="Rodriguez L."/>
            <person name="Manser C."/>
            <person name="De Vos K.J."/>
            <person name="Miller C.C."/>
        </authorList>
    </citation>
    <scope>FUNCTION</scope>
    <scope>SUBCELLULAR LOCATION</scope>
    <scope>INTERACTION WITH KLC1</scope>
</reference>
<feature type="signal peptide" evidence="9">
    <location>
        <begin position="1"/>
        <end position="28"/>
    </location>
</feature>
<feature type="chain" id="PRO_0000004021" description="Calsyntenin-1">
    <location>
        <begin position="29"/>
        <end position="981"/>
    </location>
</feature>
<feature type="chain" id="PRO_0000323597" description="Soluble Alc-alpha" evidence="19">
    <location>
        <begin position="29"/>
        <end position="825"/>
    </location>
</feature>
<feature type="chain" id="PRO_0000323598" description="CTF1-alpha" evidence="19">
    <location>
        <begin position="826"/>
        <end position="981"/>
    </location>
</feature>
<feature type="topological domain" description="Extracellular" evidence="4">
    <location>
        <begin position="29"/>
        <end position="859"/>
    </location>
</feature>
<feature type="transmembrane region" description="Helical" evidence="4">
    <location>
        <begin position="860"/>
        <end position="880"/>
    </location>
</feature>
<feature type="topological domain" description="Cytoplasmic" evidence="4">
    <location>
        <begin position="881"/>
        <end position="981"/>
    </location>
</feature>
<feature type="domain" description="Cadherin 1" evidence="5">
    <location>
        <begin position="38"/>
        <end position="164"/>
    </location>
</feature>
<feature type="domain" description="Cadherin 2" evidence="5">
    <location>
        <begin position="165"/>
        <end position="265"/>
    </location>
</feature>
<feature type="region of interest" description="Disordered" evidence="6">
    <location>
        <begin position="915"/>
        <end position="981"/>
    </location>
</feature>
<feature type="compositionally biased region" description="Acidic residues" evidence="6">
    <location>
        <begin position="925"/>
        <end position="960"/>
    </location>
</feature>
<feature type="compositionally biased region" description="Polar residues" evidence="6">
    <location>
        <begin position="962"/>
        <end position="981"/>
    </location>
</feature>
<feature type="site" description="Cleavage" evidence="1">
    <location>
        <begin position="824"/>
        <end position="825"/>
    </location>
</feature>
<feature type="site" description="Cleavage" evidence="1">
    <location>
        <begin position="853"/>
        <end position="854"/>
    </location>
</feature>
<feature type="glycosylation site" description="N-linked (GlcNAc...) asparagine" evidence="4">
    <location>
        <position position="346"/>
    </location>
</feature>
<feature type="glycosylation site" description="N-linked (GlcNAc...) asparagine" evidence="4">
    <location>
        <position position="366"/>
    </location>
</feature>
<feature type="glycosylation site" description="N-linked (GlcNAc...) asparagine" evidence="4">
    <location>
        <position position="515"/>
    </location>
</feature>
<feature type="splice variant" id="VSP_032035" description="In isoform 2." evidence="15 16 17">
    <location>
        <begin position="72"/>
        <end position="81"/>
    </location>
</feature>
<feature type="sequence variant" id="VAR_048582" description="In dbSNP:rs7550295.">
    <original>A</original>
    <variation>T</variation>
    <location>
        <position position="332"/>
    </location>
</feature>
<feature type="sequence variant" id="VAR_039552" description="In dbSNP:rs17853245." evidence="10">
    <original>V</original>
    <variation>A</variation>
    <location>
        <position position="474"/>
    </location>
</feature>
<feature type="sequence variant" id="VAR_039553" description="In dbSNP:rs17853244." evidence="10">
    <original>S</original>
    <variation>C</variation>
    <location>
        <position position="524"/>
    </location>
</feature>
<feature type="sequence variant" id="VAR_039554" description="In dbSNP:rs17853243." evidence="10">
    <original>P</original>
    <variation>R</variation>
    <location>
        <position position="583"/>
    </location>
</feature>
<feature type="sequence variant" id="VAR_039555" description="In dbSNP:rs17855572." evidence="10">
    <original>P</original>
    <variation>H</variation>
    <location>
        <position position="857"/>
    </location>
</feature>
<feature type="sequence variant" id="VAR_039556" description="In dbSNP:rs17855573." evidence="10">
    <original>F</original>
    <variation>S</variation>
    <location>
        <position position="870"/>
    </location>
</feature>
<feature type="mutagenesis site" description="Abolishes interaction with APBA2." evidence="8">
    <original>NP</original>
    <variation>AA</variation>
    <location>
        <begin position="913"/>
        <end position="914"/>
    </location>
</feature>
<feature type="mutagenesis site" description="No effect on APBA2-binding." evidence="8">
    <original>Y</original>
    <variation>A</variation>
    <location>
        <position position="918"/>
    </location>
</feature>
<feature type="sequence conflict" description="In Ref. 3; BAF82487." evidence="18" ref="3">
    <original>D</original>
    <variation>G</variation>
    <location>
        <position position="102"/>
    </location>
</feature>
<feature type="sequence conflict" description="In Ref. 3; BAF82487." evidence="18" ref="3">
    <original>K</original>
    <variation>R</variation>
    <location>
        <position position="553"/>
    </location>
</feature>
<feature type="sequence conflict" description="In Ref. 1; AAQ04552." evidence="18" ref="1">
    <original>HR</original>
    <variation>ST</variation>
    <location>
        <begin position="886"/>
        <end position="887"/>
    </location>
</feature>